<dbReference type="EC" id="3.4.19.3" evidence="1"/>
<dbReference type="EMBL" id="AM295250">
    <property type="protein sequence ID" value="CAL28177.1"/>
    <property type="molecule type" value="Genomic_DNA"/>
</dbReference>
<dbReference type="RefSeq" id="WP_015900517.1">
    <property type="nucleotide sequence ID" value="NC_012121.1"/>
</dbReference>
<dbReference type="SMR" id="B9DND6"/>
<dbReference type="MEROPS" id="C15.001"/>
<dbReference type="GeneID" id="93793695"/>
<dbReference type="KEGG" id="sca:SCA_1271"/>
<dbReference type="eggNOG" id="COG2039">
    <property type="taxonomic scope" value="Bacteria"/>
</dbReference>
<dbReference type="HOGENOM" id="CLU_043960_4_0_9"/>
<dbReference type="OrthoDB" id="9779738at2"/>
<dbReference type="BioCyc" id="SCAR396513:SCA_RS06340-MONOMER"/>
<dbReference type="Proteomes" id="UP000000444">
    <property type="component" value="Chromosome"/>
</dbReference>
<dbReference type="GO" id="GO:0005829">
    <property type="term" value="C:cytosol"/>
    <property type="evidence" value="ECO:0007669"/>
    <property type="project" value="InterPro"/>
</dbReference>
<dbReference type="GO" id="GO:0016920">
    <property type="term" value="F:pyroglutamyl-peptidase activity"/>
    <property type="evidence" value="ECO:0007669"/>
    <property type="project" value="UniProtKB-UniRule"/>
</dbReference>
<dbReference type="GO" id="GO:0006508">
    <property type="term" value="P:proteolysis"/>
    <property type="evidence" value="ECO:0007669"/>
    <property type="project" value="UniProtKB-KW"/>
</dbReference>
<dbReference type="CDD" id="cd00501">
    <property type="entry name" value="Peptidase_C15"/>
    <property type="match status" value="1"/>
</dbReference>
<dbReference type="FunFam" id="3.40.630.20:FF:000001">
    <property type="entry name" value="Pyrrolidone-carboxylate peptidase"/>
    <property type="match status" value="1"/>
</dbReference>
<dbReference type="Gene3D" id="3.40.630.20">
    <property type="entry name" value="Peptidase C15, pyroglutamyl peptidase I-like"/>
    <property type="match status" value="1"/>
</dbReference>
<dbReference type="HAMAP" id="MF_00417">
    <property type="entry name" value="Pyrrolid_peptidase"/>
    <property type="match status" value="1"/>
</dbReference>
<dbReference type="InterPro" id="IPR000816">
    <property type="entry name" value="Peptidase_C15"/>
</dbReference>
<dbReference type="InterPro" id="IPR016125">
    <property type="entry name" value="Peptidase_C15-like"/>
</dbReference>
<dbReference type="InterPro" id="IPR036440">
    <property type="entry name" value="Peptidase_C15-like_sf"/>
</dbReference>
<dbReference type="InterPro" id="IPR029762">
    <property type="entry name" value="PGP-I_bact-type"/>
</dbReference>
<dbReference type="InterPro" id="IPR033694">
    <property type="entry name" value="PGPEP1_Cys_AS"/>
</dbReference>
<dbReference type="InterPro" id="IPR033693">
    <property type="entry name" value="PGPEP1_Glu_AS"/>
</dbReference>
<dbReference type="NCBIfam" id="NF009676">
    <property type="entry name" value="PRK13197.1"/>
    <property type="match status" value="1"/>
</dbReference>
<dbReference type="NCBIfam" id="TIGR00504">
    <property type="entry name" value="pyro_pdase"/>
    <property type="match status" value="1"/>
</dbReference>
<dbReference type="PANTHER" id="PTHR23402">
    <property type="entry name" value="PROTEASE FAMILY C15 PYROGLUTAMYL-PEPTIDASE I-RELATED"/>
    <property type="match status" value="1"/>
</dbReference>
<dbReference type="PANTHER" id="PTHR23402:SF1">
    <property type="entry name" value="PYROGLUTAMYL-PEPTIDASE I"/>
    <property type="match status" value="1"/>
</dbReference>
<dbReference type="Pfam" id="PF01470">
    <property type="entry name" value="Peptidase_C15"/>
    <property type="match status" value="1"/>
</dbReference>
<dbReference type="PIRSF" id="PIRSF015592">
    <property type="entry name" value="Prld-crbxl_pptds"/>
    <property type="match status" value="1"/>
</dbReference>
<dbReference type="PRINTS" id="PR00706">
    <property type="entry name" value="PYROGLUPTASE"/>
</dbReference>
<dbReference type="SUPFAM" id="SSF53182">
    <property type="entry name" value="Pyrrolidone carboxyl peptidase (pyroglutamate aminopeptidase)"/>
    <property type="match status" value="1"/>
</dbReference>
<dbReference type="PROSITE" id="PS01334">
    <property type="entry name" value="PYRASE_CYS"/>
    <property type="match status" value="1"/>
</dbReference>
<dbReference type="PROSITE" id="PS01333">
    <property type="entry name" value="PYRASE_GLU"/>
    <property type="match status" value="1"/>
</dbReference>
<gene>
    <name evidence="1" type="primary">pcp</name>
    <name type="ordered locus">Sca_1271</name>
</gene>
<accession>B9DND6</accession>
<feature type="chain" id="PRO_1000192224" description="Pyrrolidone-carboxylate peptidase">
    <location>
        <begin position="1"/>
        <end position="213"/>
    </location>
</feature>
<feature type="active site" evidence="1">
    <location>
        <position position="78"/>
    </location>
</feature>
<feature type="active site" evidence="1">
    <location>
        <position position="141"/>
    </location>
</feature>
<feature type="active site" evidence="1">
    <location>
        <position position="165"/>
    </location>
</feature>
<name>PCP_STACT</name>
<protein>
    <recommendedName>
        <fullName evidence="1">Pyrrolidone-carboxylate peptidase</fullName>
        <ecNumber evidence="1">3.4.19.3</ecNumber>
    </recommendedName>
    <alternativeName>
        <fullName evidence="1">5-oxoprolyl-peptidase</fullName>
    </alternativeName>
    <alternativeName>
        <fullName evidence="1">Pyroglutamyl-peptidase I</fullName>
        <shortName evidence="1">PGP-I</shortName>
        <shortName evidence="1">Pyrase</shortName>
    </alternativeName>
</protein>
<keyword id="KW-0963">Cytoplasm</keyword>
<keyword id="KW-0378">Hydrolase</keyword>
<keyword id="KW-0645">Protease</keyword>
<keyword id="KW-1185">Reference proteome</keyword>
<keyword id="KW-0788">Thiol protease</keyword>
<comment type="function">
    <text evidence="1">Removes 5-oxoproline from various penultimate amino acid residues except L-proline.</text>
</comment>
<comment type="catalytic activity">
    <reaction evidence="1">
        <text>Release of an N-terminal pyroglutamyl group from a polypeptide, the second amino acid generally not being Pro.</text>
        <dbReference type="EC" id="3.4.19.3"/>
    </reaction>
</comment>
<comment type="subunit">
    <text evidence="1">Homotetramer.</text>
</comment>
<comment type="subcellular location">
    <subcellularLocation>
        <location evidence="1">Cytoplasm</location>
    </subcellularLocation>
</comment>
<comment type="similarity">
    <text evidence="1">Belongs to the peptidase C15 family.</text>
</comment>
<organism>
    <name type="scientific">Staphylococcus carnosus (strain TM300)</name>
    <dbReference type="NCBI Taxonomy" id="396513"/>
    <lineage>
        <taxon>Bacteria</taxon>
        <taxon>Bacillati</taxon>
        <taxon>Bacillota</taxon>
        <taxon>Bacilli</taxon>
        <taxon>Bacillales</taxon>
        <taxon>Staphylococcaceae</taxon>
        <taxon>Staphylococcus</taxon>
    </lineage>
</organism>
<sequence length="213" mass="23268">MKILITAFDPFGGEKKNPALEAIKLLPEQIKNHQITKLEIPTVFHKSSDKIADKLKAEHFDAVIAIGQAGGRYNLTPERVGINIDDARIPDNENNQPIDIPIQQDGAPAYFSNLPVKKMTQAIKDAGIPAALSNTAGTFVCNHILYQLGYLQATRYPDIKFGFIHVPFIPEQVVDKPDKPSMALSSIVTGLEAAIGAISEDNQDIKEALGEIQ</sequence>
<proteinExistence type="inferred from homology"/>
<reference key="1">
    <citation type="journal article" date="2009" name="Appl. Environ. Microbiol.">
        <title>Genome analysis of the meat starter culture bacterium Staphylococcus carnosus TM300.</title>
        <authorList>
            <person name="Rosenstein R."/>
            <person name="Nerz C."/>
            <person name="Biswas L."/>
            <person name="Resch A."/>
            <person name="Raddatz G."/>
            <person name="Schuster S.C."/>
            <person name="Goetz F."/>
        </authorList>
    </citation>
    <scope>NUCLEOTIDE SEQUENCE [LARGE SCALE GENOMIC DNA]</scope>
    <source>
        <strain>TM300</strain>
    </source>
</reference>
<evidence type="ECO:0000255" key="1">
    <source>
        <dbReference type="HAMAP-Rule" id="MF_00417"/>
    </source>
</evidence>